<sequence length="60" mass="6725">MKNVLILGAGGQIARHVINQLADKQTIKQTLFARQPAKIHKPYPTNKMQTTSGKKVIQDR</sequence>
<evidence type="ECO:0000256" key="1">
    <source>
        <dbReference type="SAM" id="MobiDB-lite"/>
    </source>
</evidence>
<evidence type="ECO:0000305" key="2"/>
<name>YMJC_ECOLI</name>
<comment type="miscellaneous">
    <text evidence="2">Missing about 170 C-terminal residues compared to orthologs.</text>
</comment>
<keyword id="KW-1185">Reference proteome</keyword>
<protein>
    <recommendedName>
        <fullName>Protein YmjC</fullName>
    </recommendedName>
</protein>
<dbReference type="EMBL" id="U00096">
    <property type="protein sequence ID" value="AYC08201.1"/>
    <property type="molecule type" value="Genomic_DNA"/>
</dbReference>
<dbReference type="EMBL" id="AP009048">
    <property type="protein sequence ID" value="BAE76402.1"/>
    <property type="molecule type" value="Genomic_DNA"/>
</dbReference>
<dbReference type="SMR" id="Q2EER5"/>
<dbReference type="BioGRID" id="4262875">
    <property type="interactions" value="1"/>
</dbReference>
<dbReference type="FunCoup" id="Q2EER5">
    <property type="interactions" value="2"/>
</dbReference>
<dbReference type="EnsemblBacteria" id="AYC08201">
    <property type="protein sequence ID" value="AYC08201"/>
    <property type="gene ID" value="b4525"/>
</dbReference>
<dbReference type="KEGG" id="ecj:JW5960"/>
<dbReference type="KEGG" id="ecoc:C3026_07765"/>
<dbReference type="PATRIC" id="fig|1411691.4.peg.951"/>
<dbReference type="eggNOG" id="COG0702">
    <property type="taxonomic scope" value="Bacteria"/>
</dbReference>
<dbReference type="HOGENOM" id="CLU_3042875_0_0_6"/>
<dbReference type="InParanoid" id="Q2EER5"/>
<dbReference type="BioCyc" id="EcoCyc:MONOMER0-2668"/>
<dbReference type="PRO" id="PR:Q2EER5"/>
<dbReference type="Proteomes" id="UP000000625">
    <property type="component" value="Chromosome"/>
</dbReference>
<dbReference type="Gene3D" id="3.40.50.720">
    <property type="entry name" value="NAD(P)-binding Rossmann-like Domain"/>
    <property type="match status" value="1"/>
</dbReference>
<dbReference type="InterPro" id="IPR036291">
    <property type="entry name" value="NAD(P)-bd_dom_sf"/>
</dbReference>
<dbReference type="SUPFAM" id="SSF51735">
    <property type="entry name" value="NAD(P)-binding Rossmann-fold domains"/>
    <property type="match status" value="1"/>
</dbReference>
<accession>Q2EER5</accession>
<accession>A0A385XM98</accession>
<accession>Q2MBF4</accession>
<gene>
    <name type="primary">ymjC</name>
    <name type="ordered locus">b4525</name>
    <name type="ordered locus">JW5960</name>
</gene>
<feature type="chain" id="PRO_0000252227" description="Protein YmjC">
    <location>
        <begin position="1"/>
        <end position="60"/>
    </location>
</feature>
<feature type="region of interest" description="Disordered" evidence="1">
    <location>
        <begin position="40"/>
        <end position="60"/>
    </location>
</feature>
<organism>
    <name type="scientific">Escherichia coli (strain K12)</name>
    <dbReference type="NCBI Taxonomy" id="83333"/>
    <lineage>
        <taxon>Bacteria</taxon>
        <taxon>Pseudomonadati</taxon>
        <taxon>Pseudomonadota</taxon>
        <taxon>Gammaproteobacteria</taxon>
        <taxon>Enterobacterales</taxon>
        <taxon>Enterobacteriaceae</taxon>
        <taxon>Escherichia</taxon>
    </lineage>
</organism>
<proteinExistence type="predicted"/>
<reference key="1">
    <citation type="journal article" date="1997" name="Science">
        <title>The complete genome sequence of Escherichia coli K-12.</title>
        <authorList>
            <person name="Blattner F.R."/>
            <person name="Plunkett G. III"/>
            <person name="Bloch C.A."/>
            <person name="Perna N.T."/>
            <person name="Burland V."/>
            <person name="Riley M."/>
            <person name="Collado-Vides J."/>
            <person name="Glasner J.D."/>
            <person name="Rode C.K."/>
            <person name="Mayhew G.F."/>
            <person name="Gregor J."/>
            <person name="Davis N.W."/>
            <person name="Kirkpatrick H.A."/>
            <person name="Goeden M.A."/>
            <person name="Rose D.J."/>
            <person name="Mau B."/>
            <person name="Shao Y."/>
        </authorList>
    </citation>
    <scope>NUCLEOTIDE SEQUENCE [LARGE SCALE GENOMIC DNA]</scope>
    <source>
        <strain>K12 / MG1655 / ATCC 47076</strain>
    </source>
</reference>
<reference key="2">
    <citation type="journal article" date="2006" name="Mol. Syst. Biol.">
        <title>Highly accurate genome sequences of Escherichia coli K-12 strains MG1655 and W3110.</title>
        <authorList>
            <person name="Hayashi K."/>
            <person name="Morooka N."/>
            <person name="Yamamoto Y."/>
            <person name="Fujita K."/>
            <person name="Isono K."/>
            <person name="Choi S."/>
            <person name="Ohtsubo E."/>
            <person name="Baba T."/>
            <person name="Wanner B.L."/>
            <person name="Mori H."/>
            <person name="Horiuchi T."/>
        </authorList>
    </citation>
    <scope>NUCLEOTIDE SEQUENCE [LARGE SCALE GENOMIC DNA]</scope>
    <source>
        <strain>K12 / W3110 / ATCC 27325 / DSM 5911</strain>
    </source>
</reference>